<comment type="function">
    <text evidence="4 5 6 9">Component the THO subcomplex of the TREX complex, which operates in coupling transcription elongation to mRNA export. The THO complex is recruited to transcribed genes and moves along the gene with the elongating polymerase during transcription. THO is important for stabilizing nascent RNA in the RNA polymerase II elongation complex by preventing formation of DNA:RNA hybrids behind the elongating polymerase. It functions in cotranscriptional formation of an export-competent messenger ribonucleoprotein particle (mRNP) by facilitating the loading of ATP-dependent RNA helicase SUB2 and the mRNA export factor YRA1 along the nascent mRNA.</text>
</comment>
<comment type="subunit">
    <text evidence="2 3">Component of the THO complex, which is composed of HPR1, MFT1, THO2 and THP2. Together with SUB2, TEX1 and YRA1, THO forms the transcription/export (TREX) complex. THO associates with DNA and RNA in vitro.</text>
</comment>
<comment type="interaction">
    <interactant intactId="EBI-10841">
        <id>P33441</id>
    </interactant>
    <interactant intactId="EBI-30898">
        <id>O13539</id>
        <label>THP2</label>
    </interactant>
    <organismsDiffer>false</organismsDiffer>
    <experiments>5</experiments>
</comment>
<comment type="subcellular location">
    <subcellularLocation>
        <location evidence="2 7">Nucleus</location>
    </subcellularLocation>
</comment>
<comment type="miscellaneous">
    <text evidence="8">Present with 5910 molecules/cell in log phase SD medium.</text>
</comment>
<comment type="caution">
    <text evidence="10">Was originally thought to be involved in mitochondrial protein import.</text>
</comment>
<protein>
    <recommendedName>
        <fullName>THO complex subunit MFT1</fullName>
    </recommendedName>
    <alternativeName>
        <fullName>Mitochondrial fusion target protein 1</fullName>
    </alternativeName>
</protein>
<organism>
    <name type="scientific">Saccharomyces cerevisiae (strain ATCC 204508 / S288c)</name>
    <name type="common">Baker's yeast</name>
    <dbReference type="NCBI Taxonomy" id="559292"/>
    <lineage>
        <taxon>Eukaryota</taxon>
        <taxon>Fungi</taxon>
        <taxon>Dikarya</taxon>
        <taxon>Ascomycota</taxon>
        <taxon>Saccharomycotina</taxon>
        <taxon>Saccharomycetes</taxon>
        <taxon>Saccharomycetales</taxon>
        <taxon>Saccharomycetaceae</taxon>
        <taxon>Saccharomyces</taxon>
    </lineage>
</organism>
<name>MFT1_YEAST</name>
<keyword id="KW-0002">3D-structure</keyword>
<keyword id="KW-0539">Nucleus</keyword>
<keyword id="KW-0597">Phosphoprotein</keyword>
<keyword id="KW-1185">Reference proteome</keyword>
<keyword id="KW-0804">Transcription</keyword>
<keyword id="KW-0805">Transcription regulation</keyword>
<proteinExistence type="evidence at protein level"/>
<reference key="1">
    <citation type="journal article" date="1993" name="FEBS Lett.">
        <title>Precise mapping and molecular characterization of the MFT1 gene involved in import of a fusion protein into mitochondria in Saccharomyces cerevisiae.</title>
        <authorList>
            <person name="Ito M."/>
            <person name="Yasui A."/>
            <person name="Komamine A."/>
        </authorList>
    </citation>
    <scope>NUCLEOTIDE SEQUENCE [GENOMIC DNA]</scope>
</reference>
<reference key="2">
    <citation type="journal article" date="1997" name="Nature">
        <title>The nucleotide sequence of Saccharomyces cerevisiae chromosome XIII.</title>
        <authorList>
            <person name="Bowman S."/>
            <person name="Churcher C.M."/>
            <person name="Badcock K."/>
            <person name="Brown D."/>
            <person name="Chillingworth T."/>
            <person name="Connor R."/>
            <person name="Dedman K."/>
            <person name="Devlin K."/>
            <person name="Gentles S."/>
            <person name="Hamlin N."/>
            <person name="Hunt S."/>
            <person name="Jagels K."/>
            <person name="Lye G."/>
            <person name="Moule S."/>
            <person name="Odell C."/>
            <person name="Pearson D."/>
            <person name="Rajandream M.A."/>
            <person name="Rice P."/>
            <person name="Skelton J."/>
            <person name="Walsh S.V."/>
            <person name="Whitehead S."/>
            <person name="Barrell B.G."/>
        </authorList>
    </citation>
    <scope>NUCLEOTIDE SEQUENCE [LARGE SCALE GENOMIC DNA]</scope>
    <source>
        <strain>ATCC 204508 / S288c</strain>
    </source>
</reference>
<reference key="3">
    <citation type="journal article" date="2014" name="G3 (Bethesda)">
        <title>The reference genome sequence of Saccharomyces cerevisiae: Then and now.</title>
        <authorList>
            <person name="Engel S.R."/>
            <person name="Dietrich F.S."/>
            <person name="Fisk D.G."/>
            <person name="Binkley G."/>
            <person name="Balakrishnan R."/>
            <person name="Costanzo M.C."/>
            <person name="Dwight S.S."/>
            <person name="Hitz B.C."/>
            <person name="Karra K."/>
            <person name="Nash R.S."/>
            <person name="Weng S."/>
            <person name="Wong E.D."/>
            <person name="Lloyd P."/>
            <person name="Skrzypek M.S."/>
            <person name="Miyasato S.R."/>
            <person name="Simison M."/>
            <person name="Cherry J.M."/>
        </authorList>
    </citation>
    <scope>GENOME REANNOTATION</scope>
    <source>
        <strain>ATCC 204508 / S288c</strain>
    </source>
</reference>
<reference key="4">
    <citation type="journal article" date="2000" name="EMBO J.">
        <title>A protein complex containing Tho2, Hpr1, Mft1 and a novel protein, Thp2, connects transcription elongation with mitotic recombination in Saccharomyces cerevisiae.</title>
        <authorList>
            <person name="Chavez S."/>
            <person name="Beilharz T."/>
            <person name="Rondon A.G."/>
            <person name="Erdjument-Bromage H."/>
            <person name="Tempst P."/>
            <person name="Svejstrup J.Q."/>
            <person name="Lithgow T."/>
            <person name="Aguilera A."/>
        </authorList>
    </citation>
    <scope>IDENTIFICATION IN THO COMPLEX</scope>
    <scope>IDENTIFICATION BY MASS SPECTROMETRY</scope>
    <scope>SUBCELLULAR LOCATION</scope>
</reference>
<reference key="5">
    <citation type="journal article" date="2002" name="EMBO J.">
        <title>The yeast THO complex and mRNA export factors link RNA metabolism with transcription and genome instability.</title>
        <authorList>
            <person name="Jimeno S."/>
            <person name="Rondon A.G."/>
            <person name="Luna R."/>
            <person name="Aguilera A."/>
        </authorList>
    </citation>
    <scope>FUNCTION</scope>
</reference>
<reference key="6">
    <citation type="journal article" date="2002" name="Nature">
        <title>TREX is a conserved complex coupling transcription with messenger RNA export.</title>
        <authorList>
            <person name="Straesser K."/>
            <person name="Masuda S."/>
            <person name="Mason P."/>
            <person name="Pfannstiel J."/>
            <person name="Oppizzi M."/>
            <person name="Rodriguez-Navarro S."/>
            <person name="Rondon A.G."/>
            <person name="Aguilera A."/>
            <person name="Struhl K."/>
            <person name="Reed R."/>
            <person name="Hurt E."/>
        </authorList>
    </citation>
    <scope>IDENTIFICATION IN TREX COMPLEX</scope>
    <scope>IDENTIFICATION BY MASS SPECTROMETRY</scope>
</reference>
<reference key="7">
    <citation type="journal article" date="2003" name="J. Biol. Chem.">
        <title>Molecular evidence that the eukaryotic THO/TREX complex is required for efficient transcription elongation.</title>
        <authorList>
            <person name="Rondon A.G."/>
            <person name="Jimeno S."/>
            <person name="Garcia-Rubio M."/>
            <person name="Aguilera A."/>
        </authorList>
    </citation>
    <scope>FUNCTION</scope>
</reference>
<reference key="8">
    <citation type="journal article" date="2003" name="Mol. Cell">
        <title>Cotranscriptionally formed DNA:RNA hybrids mediate transcription elongation impairment and transcription-associated recombination.</title>
        <authorList>
            <person name="Huertas P."/>
            <person name="Aguilera A."/>
        </authorList>
    </citation>
    <scope>FUNCTION</scope>
</reference>
<reference key="9">
    <citation type="journal article" date="2003" name="Nature">
        <title>Global analysis of protein localization in budding yeast.</title>
        <authorList>
            <person name="Huh W.-K."/>
            <person name="Falvo J.V."/>
            <person name="Gerke L.C."/>
            <person name="Carroll A.S."/>
            <person name="Howson R.W."/>
            <person name="Weissman J.S."/>
            <person name="O'Shea E.K."/>
        </authorList>
    </citation>
    <scope>SUBCELLULAR LOCATION [LARGE SCALE ANALYSIS]</scope>
</reference>
<reference key="10">
    <citation type="journal article" date="2003" name="Nature">
        <title>Global analysis of protein expression in yeast.</title>
        <authorList>
            <person name="Ghaemmaghami S."/>
            <person name="Huh W.-K."/>
            <person name="Bower K."/>
            <person name="Howson R.W."/>
            <person name="Belle A."/>
            <person name="Dephoure N."/>
            <person name="O'Shea E.K."/>
            <person name="Weissman J.S."/>
        </authorList>
    </citation>
    <scope>LEVEL OF PROTEIN EXPRESSION [LARGE SCALE ANALYSIS]</scope>
</reference>
<reference key="11">
    <citation type="journal article" date="2004" name="EMBO J.">
        <title>Biochemical analysis of TREX complex recruitment to intronless and intron-containing yeast genes.</title>
        <authorList>
            <person name="Abruzzi K.C."/>
            <person name="Lacadie S."/>
            <person name="Rosbash M."/>
        </authorList>
    </citation>
    <scope>FUNCTION</scope>
</reference>
<reference key="12">
    <citation type="journal article" date="2007" name="J. Proteome Res.">
        <title>Large-scale phosphorylation analysis of alpha-factor-arrested Saccharomyces cerevisiae.</title>
        <authorList>
            <person name="Li X."/>
            <person name="Gerber S.A."/>
            <person name="Rudner A.D."/>
            <person name="Beausoleil S.A."/>
            <person name="Haas W."/>
            <person name="Villen J."/>
            <person name="Elias J.E."/>
            <person name="Gygi S.P."/>
        </authorList>
    </citation>
    <scope>PHOSPHORYLATION [LARGE SCALE ANALYSIS] AT SER-266</scope>
    <scope>IDENTIFICATION BY MASS SPECTROMETRY [LARGE SCALE ANALYSIS]</scope>
    <source>
        <strain>ADR376</strain>
    </source>
</reference>
<reference key="13">
    <citation type="journal article" date="2008" name="Mol. Cell. Proteomics">
        <title>A multidimensional chromatography technology for in-depth phosphoproteome analysis.</title>
        <authorList>
            <person name="Albuquerque C.P."/>
            <person name="Smolka M.B."/>
            <person name="Payne S.H."/>
            <person name="Bafna V."/>
            <person name="Eng J."/>
            <person name="Zhou H."/>
        </authorList>
    </citation>
    <scope>PHOSPHORYLATION [LARGE SCALE ANALYSIS] AT SER-266</scope>
    <scope>IDENTIFICATION BY MASS SPECTROMETRY [LARGE SCALE ANALYSIS]</scope>
</reference>
<reference key="14">
    <citation type="journal article" date="2009" name="Science">
        <title>Global analysis of Cdk1 substrate phosphorylation sites provides insights into evolution.</title>
        <authorList>
            <person name="Holt L.J."/>
            <person name="Tuch B.B."/>
            <person name="Villen J."/>
            <person name="Johnson A.D."/>
            <person name="Gygi S.P."/>
            <person name="Morgan D.O."/>
        </authorList>
    </citation>
    <scope>PHOSPHORYLATION [LARGE SCALE ANALYSIS] AT SER-266</scope>
    <scope>IDENTIFICATION BY MASS SPECTROMETRY [LARGE SCALE ANALYSIS]</scope>
</reference>
<reference key="15">
    <citation type="journal article" date="2012" name="Proc. Natl. Acad. Sci. U.S.A.">
        <title>N-terminal acetylome analyses and functional insights of the N-terminal acetyltransferase NatB.</title>
        <authorList>
            <person name="Van Damme P."/>
            <person name="Lasa M."/>
            <person name="Polevoda B."/>
            <person name="Gazquez C."/>
            <person name="Elosegui-Artola A."/>
            <person name="Kim D.S."/>
            <person name="De Juan-Pardo E."/>
            <person name="Demeyer K."/>
            <person name="Hole K."/>
            <person name="Larrea E."/>
            <person name="Timmerman E."/>
            <person name="Prieto J."/>
            <person name="Arnesen T."/>
            <person name="Sherman F."/>
            <person name="Gevaert K."/>
            <person name="Aldabe R."/>
        </authorList>
    </citation>
    <scope>IDENTIFICATION BY MASS SPECTROMETRY [LARGE SCALE ANALYSIS]</scope>
</reference>
<sequence length="392" mass="44996">MPLSQKQIDQVRTKVHYSEVDTPFNKYLDILGKVTKLTGSIINGTLSNDDSKIEKLTEQNISQLKESAHLRFLDLQSSIDTKKVADENWETCQQETLAKLENLKDKLPDIKSIHSKLLLRIGKLQGLYDSVQVINREVEGLSEGRTSLVVTRAEWEKELGTDLVKFLIEKNYLKLVDPGLKKDSSEERYRIYDDFSKGPKELESINASMKSDIENVRQEVSSYKEKWLRDAEIFGKITSIFKEELLKRDGLLNEAEGDNIDEDYESDEDEERKERFKRQRSMVEVNTIENVDEKEESDHEYDDQEDEENEEEDDMEVDVEDIKEDNEVDGESSQQEDNSRQGNNEETDKETGVIEEPDAVNDAEEADSDHSSRKLGGTTSDFSASSSVEEVK</sequence>
<gene>
    <name type="primary">MFT1</name>
    <name type="ordered locus">YML062C</name>
</gene>
<feature type="chain" id="PRO_0000096463" description="THO complex subunit MFT1">
    <location>
        <begin position="1"/>
        <end position="392"/>
    </location>
</feature>
<feature type="region of interest" description="Disordered" evidence="1">
    <location>
        <begin position="258"/>
        <end position="392"/>
    </location>
</feature>
<feature type="compositionally biased region" description="Acidic residues" evidence="1">
    <location>
        <begin position="258"/>
        <end position="271"/>
    </location>
</feature>
<feature type="compositionally biased region" description="Acidic residues" evidence="1">
    <location>
        <begin position="290"/>
        <end position="330"/>
    </location>
</feature>
<feature type="compositionally biased region" description="Polar residues" evidence="1">
    <location>
        <begin position="331"/>
        <end position="344"/>
    </location>
</feature>
<feature type="compositionally biased region" description="Acidic residues" evidence="1">
    <location>
        <begin position="345"/>
        <end position="367"/>
    </location>
</feature>
<feature type="compositionally biased region" description="Polar residues" evidence="1">
    <location>
        <begin position="377"/>
        <end position="392"/>
    </location>
</feature>
<feature type="modified residue" description="Phosphoserine" evidence="11 12 13">
    <location>
        <position position="266"/>
    </location>
</feature>
<feature type="helix" evidence="15">
    <location>
        <begin position="5"/>
        <end position="16"/>
    </location>
</feature>
<feature type="helix" evidence="15">
    <location>
        <begin position="22"/>
        <end position="41"/>
    </location>
</feature>
<feature type="turn" evidence="15">
    <location>
        <begin position="42"/>
        <end position="44"/>
    </location>
</feature>
<feature type="strand" evidence="15">
    <location>
        <begin position="50"/>
        <end position="53"/>
    </location>
</feature>
<feature type="turn" evidence="15">
    <location>
        <begin position="58"/>
        <end position="60"/>
    </location>
</feature>
<feature type="helix" evidence="15">
    <location>
        <begin position="61"/>
        <end position="77"/>
    </location>
</feature>
<feature type="helix" evidence="15">
    <location>
        <begin position="80"/>
        <end position="97"/>
    </location>
</feature>
<feature type="turn" evidence="15">
    <location>
        <begin position="98"/>
        <end position="102"/>
    </location>
</feature>
<feature type="turn" evidence="14">
    <location>
        <begin position="104"/>
        <end position="106"/>
    </location>
</feature>
<feature type="helix" evidence="15">
    <location>
        <begin position="108"/>
        <end position="141"/>
    </location>
</feature>
<feature type="strand" evidence="15">
    <location>
        <begin position="146"/>
        <end position="150"/>
    </location>
</feature>
<feature type="helix" evidence="15">
    <location>
        <begin position="152"/>
        <end position="155"/>
    </location>
</feature>
<feature type="turn" evidence="15">
    <location>
        <begin position="156"/>
        <end position="158"/>
    </location>
</feature>
<feature type="helix" evidence="15">
    <location>
        <begin position="161"/>
        <end position="167"/>
    </location>
</feature>
<feature type="turn" evidence="15">
    <location>
        <begin position="168"/>
        <end position="171"/>
    </location>
</feature>
<feature type="strand" evidence="15">
    <location>
        <begin position="189"/>
        <end position="193"/>
    </location>
</feature>
<feature type="helix" evidence="15">
    <location>
        <begin position="199"/>
        <end position="234"/>
    </location>
</feature>
<feature type="turn" evidence="15">
    <location>
        <begin position="235"/>
        <end position="237"/>
    </location>
</feature>
<feature type="helix" evidence="15">
    <location>
        <begin position="238"/>
        <end position="246"/>
    </location>
</feature>
<accession>P33441</accession>
<accession>D6VZB1</accession>
<dbReference type="EMBL" id="S57517">
    <property type="protein sequence ID" value="AAB26005.1"/>
    <property type="molecule type" value="Genomic_DNA"/>
</dbReference>
<dbReference type="EMBL" id="Z38114">
    <property type="protein sequence ID" value="CAA86259.1"/>
    <property type="molecule type" value="Genomic_DNA"/>
</dbReference>
<dbReference type="EMBL" id="BK006946">
    <property type="protein sequence ID" value="DAA09835.1"/>
    <property type="molecule type" value="Genomic_DNA"/>
</dbReference>
<dbReference type="PIR" id="S32405">
    <property type="entry name" value="S32405"/>
</dbReference>
<dbReference type="RefSeq" id="NP_013649.1">
    <property type="nucleotide sequence ID" value="NM_001182421.1"/>
</dbReference>
<dbReference type="PDB" id="7APX">
    <property type="method" value="EM"/>
    <property type="resolution" value="3.40 A"/>
    <property type="chains" value="D=1-392"/>
</dbReference>
<dbReference type="PDB" id="7AQO">
    <property type="method" value="EM"/>
    <property type="resolution" value="4.50 A"/>
    <property type="chains" value="D/I=1-392"/>
</dbReference>
<dbReference type="PDB" id="7LUV">
    <property type="method" value="EM"/>
    <property type="resolution" value="3.70 A"/>
    <property type="chains" value="D=1-256"/>
</dbReference>
<dbReference type="PDB" id="7V2W">
    <property type="method" value="EM"/>
    <property type="resolution" value="3.20 A"/>
    <property type="chains" value="I=1-392"/>
</dbReference>
<dbReference type="PDB" id="7V2Y">
    <property type="method" value="EM"/>
    <property type="resolution" value="3.40 A"/>
    <property type="chains" value="D=1-392"/>
</dbReference>
<dbReference type="PDBsum" id="7APX"/>
<dbReference type="PDBsum" id="7AQO"/>
<dbReference type="PDBsum" id="7LUV"/>
<dbReference type="PDBsum" id="7V2W"/>
<dbReference type="PDBsum" id="7V2Y"/>
<dbReference type="EMDB" id="EMD-11859"/>
<dbReference type="EMDB" id="EMD-11871"/>
<dbReference type="EMDB" id="EMD-16841"/>
<dbReference type="EMDB" id="EMD-23527"/>
<dbReference type="EMDB" id="EMD-31669"/>
<dbReference type="EMDB" id="EMD-31670"/>
<dbReference type="SMR" id="P33441"/>
<dbReference type="BioGRID" id="35104">
    <property type="interactions" value="268"/>
</dbReference>
<dbReference type="ComplexPortal" id="CPX-1792">
    <property type="entry name" value="THO complex"/>
</dbReference>
<dbReference type="ComplexPortal" id="CPX-1793">
    <property type="entry name" value="TREX complex"/>
</dbReference>
<dbReference type="DIP" id="DIP-4537N"/>
<dbReference type="FunCoup" id="P33441">
    <property type="interactions" value="106"/>
</dbReference>
<dbReference type="IntAct" id="P33441">
    <property type="interactions" value="43"/>
</dbReference>
<dbReference type="MINT" id="P33441"/>
<dbReference type="STRING" id="4932.YML062C"/>
<dbReference type="TCDB" id="3.A.22.1.1">
    <property type="family name" value="the transcription-coupled trex/tap nuclear mrna export complex (trex) family"/>
</dbReference>
<dbReference type="iPTMnet" id="P33441"/>
<dbReference type="PaxDb" id="4932-YML062C"/>
<dbReference type="PeptideAtlas" id="P33441"/>
<dbReference type="EnsemblFungi" id="YML062C_mRNA">
    <property type="protein sequence ID" value="YML062C"/>
    <property type="gene ID" value="YML062C"/>
</dbReference>
<dbReference type="GeneID" id="854940"/>
<dbReference type="KEGG" id="sce:YML062C"/>
<dbReference type="AGR" id="SGD:S000004527"/>
<dbReference type="SGD" id="S000004527">
    <property type="gene designation" value="MFT1"/>
</dbReference>
<dbReference type="VEuPathDB" id="FungiDB:YML062C"/>
<dbReference type="eggNOG" id="ENOG502S0NG">
    <property type="taxonomic scope" value="Eukaryota"/>
</dbReference>
<dbReference type="HOGENOM" id="CLU_054999_1_0_1"/>
<dbReference type="InParanoid" id="P33441"/>
<dbReference type="OMA" id="YNEQDTA"/>
<dbReference type="OrthoDB" id="4035165at2759"/>
<dbReference type="BioCyc" id="YEAST:G3O-32657-MONOMER"/>
<dbReference type="BioGRID-ORCS" id="854940">
    <property type="hits" value="0 hits in 10 CRISPR screens"/>
</dbReference>
<dbReference type="PRO" id="PR:P33441"/>
<dbReference type="Proteomes" id="UP000002311">
    <property type="component" value="Chromosome XIII"/>
</dbReference>
<dbReference type="RNAct" id="P33441">
    <property type="molecule type" value="protein"/>
</dbReference>
<dbReference type="GO" id="GO:0000781">
    <property type="term" value="C:chromosome, telomeric region"/>
    <property type="evidence" value="ECO:0000314"/>
    <property type="project" value="SGD"/>
</dbReference>
<dbReference type="GO" id="GO:0000446">
    <property type="term" value="C:nucleoplasmic THO complex"/>
    <property type="evidence" value="ECO:0000315"/>
    <property type="project" value="SGD"/>
</dbReference>
<dbReference type="GO" id="GO:0000347">
    <property type="term" value="C:THO complex"/>
    <property type="evidence" value="ECO:0000353"/>
    <property type="project" value="ComplexPortal"/>
</dbReference>
<dbReference type="GO" id="GO:0000445">
    <property type="term" value="C:THO complex part of transcription export complex"/>
    <property type="evidence" value="ECO:0000315"/>
    <property type="project" value="SGD"/>
</dbReference>
<dbReference type="GO" id="GO:0000346">
    <property type="term" value="C:transcription export complex"/>
    <property type="evidence" value="ECO:0000353"/>
    <property type="project" value="ComplexPortal"/>
</dbReference>
<dbReference type="GO" id="GO:0060090">
    <property type="term" value="F:molecular adaptor activity"/>
    <property type="evidence" value="ECO:0000315"/>
    <property type="project" value="SGD"/>
</dbReference>
<dbReference type="GO" id="GO:0003676">
    <property type="term" value="F:nucleic acid binding"/>
    <property type="evidence" value="ECO:0000314"/>
    <property type="project" value="SGD"/>
</dbReference>
<dbReference type="GO" id="GO:0006310">
    <property type="term" value="P:DNA recombination"/>
    <property type="evidence" value="ECO:0000315"/>
    <property type="project" value="SGD"/>
</dbReference>
<dbReference type="GO" id="GO:0006406">
    <property type="term" value="P:mRNA export from nucleus"/>
    <property type="evidence" value="ECO:0000315"/>
    <property type="project" value="SGD"/>
</dbReference>
<dbReference type="GO" id="GO:0006397">
    <property type="term" value="P:mRNA processing"/>
    <property type="evidence" value="ECO:0007669"/>
    <property type="project" value="InterPro"/>
</dbReference>
<dbReference type="GO" id="GO:0006368">
    <property type="term" value="P:transcription elongation by RNA polymerase II"/>
    <property type="evidence" value="ECO:0000315"/>
    <property type="project" value="SGD"/>
</dbReference>
<dbReference type="InterPro" id="IPR008501">
    <property type="entry name" value="THOC7/Mft1"/>
</dbReference>
<dbReference type="Pfam" id="PF05615">
    <property type="entry name" value="THOC7"/>
    <property type="match status" value="1"/>
</dbReference>
<evidence type="ECO:0000256" key="1">
    <source>
        <dbReference type="SAM" id="MobiDB-lite"/>
    </source>
</evidence>
<evidence type="ECO:0000269" key="2">
    <source>
    </source>
</evidence>
<evidence type="ECO:0000269" key="3">
    <source>
    </source>
</evidence>
<evidence type="ECO:0000269" key="4">
    <source>
    </source>
</evidence>
<evidence type="ECO:0000269" key="5">
    <source>
    </source>
</evidence>
<evidence type="ECO:0000269" key="6">
    <source>
    </source>
</evidence>
<evidence type="ECO:0000269" key="7">
    <source>
    </source>
</evidence>
<evidence type="ECO:0000269" key="8">
    <source>
    </source>
</evidence>
<evidence type="ECO:0000269" key="9">
    <source>
    </source>
</evidence>
<evidence type="ECO:0000305" key="10">
    <source>
    </source>
</evidence>
<evidence type="ECO:0007744" key="11">
    <source>
    </source>
</evidence>
<evidence type="ECO:0007744" key="12">
    <source>
    </source>
</evidence>
<evidence type="ECO:0007744" key="13">
    <source>
    </source>
</evidence>
<evidence type="ECO:0007829" key="14">
    <source>
        <dbReference type="PDB" id="7APX"/>
    </source>
</evidence>
<evidence type="ECO:0007829" key="15">
    <source>
        <dbReference type="PDB" id="7V2W"/>
    </source>
</evidence>